<organism>
    <name type="scientific">Mus musculus</name>
    <name type="common">Mouse</name>
    <dbReference type="NCBI Taxonomy" id="10090"/>
    <lineage>
        <taxon>Eukaryota</taxon>
        <taxon>Metazoa</taxon>
        <taxon>Chordata</taxon>
        <taxon>Craniata</taxon>
        <taxon>Vertebrata</taxon>
        <taxon>Euteleostomi</taxon>
        <taxon>Mammalia</taxon>
        <taxon>Eutheria</taxon>
        <taxon>Euarchontoglires</taxon>
        <taxon>Glires</taxon>
        <taxon>Rodentia</taxon>
        <taxon>Myomorpha</taxon>
        <taxon>Muroidea</taxon>
        <taxon>Muridae</taxon>
        <taxon>Murinae</taxon>
        <taxon>Mus</taxon>
        <taxon>Mus</taxon>
    </lineage>
</organism>
<proteinExistence type="evidence at protein level"/>
<name>YIF1A_MOUSE</name>
<gene>
    <name type="primary">Yif1a</name>
</gene>
<feature type="initiator methionine" description="Removed" evidence="1">
    <location>
        <position position="1"/>
    </location>
</feature>
<feature type="chain" id="PRO_0000233276" description="Protein YIF1A">
    <location>
        <begin position="2"/>
        <end position="293"/>
    </location>
</feature>
<feature type="topological domain" description="Cytoplasmic" evidence="2">
    <location>
        <begin position="2"/>
        <end position="138"/>
    </location>
</feature>
<feature type="transmembrane region" description="Helical" evidence="2">
    <location>
        <begin position="139"/>
        <end position="159"/>
    </location>
</feature>
<feature type="topological domain" description="Lumenal" evidence="4">
    <location>
        <begin position="160"/>
        <end position="174"/>
    </location>
</feature>
<feature type="transmembrane region" description="Helical" evidence="2">
    <location>
        <begin position="175"/>
        <end position="195"/>
    </location>
</feature>
<feature type="topological domain" description="Cytoplasmic" evidence="4">
    <location>
        <begin position="196"/>
        <end position="203"/>
    </location>
</feature>
<feature type="transmembrane region" description="Helical" evidence="2">
    <location>
        <begin position="204"/>
        <end position="226"/>
    </location>
</feature>
<feature type="topological domain" description="Lumenal" evidence="4">
    <location>
        <begin position="227"/>
        <end position="229"/>
    </location>
</feature>
<feature type="transmembrane region" description="Helical" evidence="2">
    <location>
        <begin position="230"/>
        <end position="249"/>
    </location>
</feature>
<feature type="topological domain" description="Cytoplasmic" evidence="4">
    <location>
        <begin position="250"/>
        <end position="271"/>
    </location>
</feature>
<feature type="transmembrane region" description="Helical" evidence="2">
    <location>
        <begin position="272"/>
        <end position="292"/>
    </location>
</feature>
<feature type="region of interest" description="Disordered" evidence="3">
    <location>
        <begin position="1"/>
        <end position="27"/>
    </location>
</feature>
<feature type="modified residue" description="N-acetylalanine" evidence="1">
    <location>
        <position position="2"/>
    </location>
</feature>
<feature type="modified residue" description="Phosphoserine" evidence="1">
    <location>
        <position position="12"/>
    </location>
</feature>
<comment type="function">
    <text evidence="1">Possible role in transport between endoplasmic reticulum and Golgi.</text>
</comment>
<comment type="subunit">
    <text evidence="1">Interacts with YIPF5.</text>
</comment>
<comment type="subcellular location">
    <subcellularLocation>
        <location evidence="1">Endoplasmic reticulum membrane</location>
        <topology evidence="2">Multi-pass membrane protein</topology>
    </subcellularLocation>
    <subcellularLocation>
        <location evidence="1">Golgi apparatus membrane</location>
        <topology evidence="2">Multi-pass membrane protein</topology>
    </subcellularLocation>
    <subcellularLocation>
        <location evidence="1">Endoplasmic reticulum-Golgi intermediate compartment membrane</location>
        <topology evidence="2">Multi-pass membrane protein</topology>
    </subcellularLocation>
    <text evidence="1">Cycles between the endoplasmic reticulum and the endoplasmic reticulum-Golgi intermediate compartment.</text>
</comment>
<comment type="similarity">
    <text evidence="4">Belongs to the YIF1 family.</text>
</comment>
<comment type="sequence caution" evidence="4">
    <conflict type="erroneous initiation">
        <sequence resource="EMBL-CDS" id="BAB21972"/>
    </conflict>
    <text>Truncated N-terminus.</text>
</comment>
<reference key="1">
    <citation type="journal article" date="2005" name="Science">
        <title>The transcriptional landscape of the mammalian genome.</title>
        <authorList>
            <person name="Carninci P."/>
            <person name="Kasukawa T."/>
            <person name="Katayama S."/>
            <person name="Gough J."/>
            <person name="Frith M.C."/>
            <person name="Maeda N."/>
            <person name="Oyama R."/>
            <person name="Ravasi T."/>
            <person name="Lenhard B."/>
            <person name="Wells C."/>
            <person name="Kodzius R."/>
            <person name="Shimokawa K."/>
            <person name="Bajic V.B."/>
            <person name="Brenner S.E."/>
            <person name="Batalov S."/>
            <person name="Forrest A.R."/>
            <person name="Zavolan M."/>
            <person name="Davis M.J."/>
            <person name="Wilming L.G."/>
            <person name="Aidinis V."/>
            <person name="Allen J.E."/>
            <person name="Ambesi-Impiombato A."/>
            <person name="Apweiler R."/>
            <person name="Aturaliya R.N."/>
            <person name="Bailey T.L."/>
            <person name="Bansal M."/>
            <person name="Baxter L."/>
            <person name="Beisel K.W."/>
            <person name="Bersano T."/>
            <person name="Bono H."/>
            <person name="Chalk A.M."/>
            <person name="Chiu K.P."/>
            <person name="Choudhary V."/>
            <person name="Christoffels A."/>
            <person name="Clutterbuck D.R."/>
            <person name="Crowe M.L."/>
            <person name="Dalla E."/>
            <person name="Dalrymple B.P."/>
            <person name="de Bono B."/>
            <person name="Della Gatta G."/>
            <person name="di Bernardo D."/>
            <person name="Down T."/>
            <person name="Engstrom P."/>
            <person name="Fagiolini M."/>
            <person name="Faulkner G."/>
            <person name="Fletcher C.F."/>
            <person name="Fukushima T."/>
            <person name="Furuno M."/>
            <person name="Futaki S."/>
            <person name="Gariboldi M."/>
            <person name="Georgii-Hemming P."/>
            <person name="Gingeras T.R."/>
            <person name="Gojobori T."/>
            <person name="Green R.E."/>
            <person name="Gustincich S."/>
            <person name="Harbers M."/>
            <person name="Hayashi Y."/>
            <person name="Hensch T.K."/>
            <person name="Hirokawa N."/>
            <person name="Hill D."/>
            <person name="Huminiecki L."/>
            <person name="Iacono M."/>
            <person name="Ikeo K."/>
            <person name="Iwama A."/>
            <person name="Ishikawa T."/>
            <person name="Jakt M."/>
            <person name="Kanapin A."/>
            <person name="Katoh M."/>
            <person name="Kawasawa Y."/>
            <person name="Kelso J."/>
            <person name="Kitamura H."/>
            <person name="Kitano H."/>
            <person name="Kollias G."/>
            <person name="Krishnan S.P."/>
            <person name="Kruger A."/>
            <person name="Kummerfeld S.K."/>
            <person name="Kurochkin I.V."/>
            <person name="Lareau L.F."/>
            <person name="Lazarevic D."/>
            <person name="Lipovich L."/>
            <person name="Liu J."/>
            <person name="Liuni S."/>
            <person name="McWilliam S."/>
            <person name="Madan Babu M."/>
            <person name="Madera M."/>
            <person name="Marchionni L."/>
            <person name="Matsuda H."/>
            <person name="Matsuzawa S."/>
            <person name="Miki H."/>
            <person name="Mignone F."/>
            <person name="Miyake S."/>
            <person name="Morris K."/>
            <person name="Mottagui-Tabar S."/>
            <person name="Mulder N."/>
            <person name="Nakano N."/>
            <person name="Nakauchi H."/>
            <person name="Ng P."/>
            <person name="Nilsson R."/>
            <person name="Nishiguchi S."/>
            <person name="Nishikawa S."/>
            <person name="Nori F."/>
            <person name="Ohara O."/>
            <person name="Okazaki Y."/>
            <person name="Orlando V."/>
            <person name="Pang K.C."/>
            <person name="Pavan W.J."/>
            <person name="Pavesi G."/>
            <person name="Pesole G."/>
            <person name="Petrovsky N."/>
            <person name="Piazza S."/>
            <person name="Reed J."/>
            <person name="Reid J.F."/>
            <person name="Ring B.Z."/>
            <person name="Ringwald M."/>
            <person name="Rost B."/>
            <person name="Ruan Y."/>
            <person name="Salzberg S.L."/>
            <person name="Sandelin A."/>
            <person name="Schneider C."/>
            <person name="Schoenbach C."/>
            <person name="Sekiguchi K."/>
            <person name="Semple C.A."/>
            <person name="Seno S."/>
            <person name="Sessa L."/>
            <person name="Sheng Y."/>
            <person name="Shibata Y."/>
            <person name="Shimada H."/>
            <person name="Shimada K."/>
            <person name="Silva D."/>
            <person name="Sinclair B."/>
            <person name="Sperling S."/>
            <person name="Stupka E."/>
            <person name="Sugiura K."/>
            <person name="Sultana R."/>
            <person name="Takenaka Y."/>
            <person name="Taki K."/>
            <person name="Tammoja K."/>
            <person name="Tan S.L."/>
            <person name="Tang S."/>
            <person name="Taylor M.S."/>
            <person name="Tegner J."/>
            <person name="Teichmann S.A."/>
            <person name="Ueda H.R."/>
            <person name="van Nimwegen E."/>
            <person name="Verardo R."/>
            <person name="Wei C.L."/>
            <person name="Yagi K."/>
            <person name="Yamanishi H."/>
            <person name="Zabarovsky E."/>
            <person name="Zhu S."/>
            <person name="Zimmer A."/>
            <person name="Hide W."/>
            <person name="Bult C."/>
            <person name="Grimmond S.M."/>
            <person name="Teasdale R.D."/>
            <person name="Liu E.T."/>
            <person name="Brusic V."/>
            <person name="Quackenbush J."/>
            <person name="Wahlestedt C."/>
            <person name="Mattick J.S."/>
            <person name="Hume D.A."/>
            <person name="Kai C."/>
            <person name="Sasaki D."/>
            <person name="Tomaru Y."/>
            <person name="Fukuda S."/>
            <person name="Kanamori-Katayama M."/>
            <person name="Suzuki M."/>
            <person name="Aoki J."/>
            <person name="Arakawa T."/>
            <person name="Iida J."/>
            <person name="Imamura K."/>
            <person name="Itoh M."/>
            <person name="Kato T."/>
            <person name="Kawaji H."/>
            <person name="Kawagashira N."/>
            <person name="Kawashima T."/>
            <person name="Kojima M."/>
            <person name="Kondo S."/>
            <person name="Konno H."/>
            <person name="Nakano K."/>
            <person name="Ninomiya N."/>
            <person name="Nishio T."/>
            <person name="Okada M."/>
            <person name="Plessy C."/>
            <person name="Shibata K."/>
            <person name="Shiraki T."/>
            <person name="Suzuki S."/>
            <person name="Tagami M."/>
            <person name="Waki K."/>
            <person name="Watahiki A."/>
            <person name="Okamura-Oho Y."/>
            <person name="Suzuki H."/>
            <person name="Kawai J."/>
            <person name="Hayashizaki Y."/>
        </authorList>
    </citation>
    <scope>NUCLEOTIDE SEQUENCE [LARGE SCALE MRNA]</scope>
    <source>
        <strain>C57BL/6J</strain>
        <tissue>Cerebellum</tissue>
        <tissue>Pituitary</tissue>
    </source>
</reference>
<reference key="2">
    <citation type="journal article" date="2004" name="Genome Res.">
        <title>The status, quality, and expansion of the NIH full-length cDNA project: the Mammalian Gene Collection (MGC).</title>
        <authorList>
            <consortium name="The MGC Project Team"/>
        </authorList>
    </citation>
    <scope>NUCLEOTIDE SEQUENCE [LARGE SCALE MRNA]</scope>
    <source>
        <strain>FVB/N</strain>
        <tissue>Salivary gland</tissue>
    </source>
</reference>
<reference key="3">
    <citation type="journal article" date="2010" name="Cell">
        <title>A tissue-specific atlas of mouse protein phosphorylation and expression.</title>
        <authorList>
            <person name="Huttlin E.L."/>
            <person name="Jedrychowski M.P."/>
            <person name="Elias J.E."/>
            <person name="Goswami T."/>
            <person name="Rad R."/>
            <person name="Beausoleil S.A."/>
            <person name="Villen J."/>
            <person name="Haas W."/>
            <person name="Sowa M.E."/>
            <person name="Gygi S.P."/>
        </authorList>
    </citation>
    <scope>IDENTIFICATION BY MASS SPECTROMETRY [LARGE SCALE ANALYSIS]</scope>
    <source>
        <tissue>Heart</tissue>
        <tissue>Kidney</tissue>
        <tissue>Lung</tissue>
        <tissue>Pancreas</tissue>
        <tissue>Testis</tissue>
    </source>
</reference>
<keyword id="KW-0007">Acetylation</keyword>
<keyword id="KW-0256">Endoplasmic reticulum</keyword>
<keyword id="KW-0931">ER-Golgi transport</keyword>
<keyword id="KW-0333">Golgi apparatus</keyword>
<keyword id="KW-0472">Membrane</keyword>
<keyword id="KW-0597">Phosphoprotein</keyword>
<keyword id="KW-0653">Protein transport</keyword>
<keyword id="KW-1185">Reference proteome</keyword>
<keyword id="KW-0812">Transmembrane</keyword>
<keyword id="KW-1133">Transmembrane helix</keyword>
<keyword id="KW-0813">Transport</keyword>
<protein>
    <recommendedName>
        <fullName>Protein YIF1A</fullName>
    </recommendedName>
    <alternativeName>
        <fullName>YIP1-interacting factor homolog A</fullName>
    </alternativeName>
</protein>
<evidence type="ECO:0000250" key="1">
    <source>
        <dbReference type="UniProtKB" id="O95070"/>
    </source>
</evidence>
<evidence type="ECO:0000255" key="2"/>
<evidence type="ECO:0000256" key="3">
    <source>
        <dbReference type="SAM" id="MobiDB-lite"/>
    </source>
</evidence>
<evidence type="ECO:0000305" key="4"/>
<sequence>MAYHSAYGVHGSKHRTRAAPDPPPLFDDTSGGYSSQLGGYPAPGADVAFSVNNLLGDPVANMAMAYGTSIASQGKDIVHKELHRFVSVNKLKYFFAVDTAYVAKKLGLLVFPYTHQNWKMQYSHDVPLPPRKDLNAPDLYIPTMAFITYVLLAGMALGIQQRFSPEVLGLCASTALVWVFMEVLALLLGLYLATVRSELSTFHLLAYSGYKYVGMILSVLTGLLFGSDGYYVALAWTSSALMYFIVRSLRTAASGPDSMGGPAPRQRLQLYLTLGAAAFQPLIIYWLTFHLVR</sequence>
<dbReference type="EMBL" id="AK002259">
    <property type="protein sequence ID" value="BAB21972.2"/>
    <property type="status" value="ALT_INIT"/>
    <property type="molecule type" value="mRNA"/>
</dbReference>
<dbReference type="EMBL" id="AK077329">
    <property type="protein sequence ID" value="BAC36754.1"/>
    <property type="molecule type" value="mRNA"/>
</dbReference>
<dbReference type="EMBL" id="AK160409">
    <property type="protein sequence ID" value="BAE35776.1"/>
    <property type="molecule type" value="mRNA"/>
</dbReference>
<dbReference type="EMBL" id="BC011117">
    <property type="protein sequence ID" value="AAH11117.1"/>
    <property type="molecule type" value="mRNA"/>
</dbReference>
<dbReference type="CCDS" id="CCDS29450.1"/>
<dbReference type="RefSeq" id="NP_080829.1">
    <property type="nucleotide sequence ID" value="NM_026553.4"/>
</dbReference>
<dbReference type="SMR" id="Q91XB7"/>
<dbReference type="BioGRID" id="212650">
    <property type="interactions" value="4"/>
</dbReference>
<dbReference type="FunCoup" id="Q91XB7">
    <property type="interactions" value="2761"/>
</dbReference>
<dbReference type="IntAct" id="Q91XB7">
    <property type="interactions" value="2"/>
</dbReference>
<dbReference type="MINT" id="Q91XB7"/>
<dbReference type="STRING" id="10090.ENSMUSP00000025811"/>
<dbReference type="iPTMnet" id="Q91XB7"/>
<dbReference type="PhosphoSitePlus" id="Q91XB7"/>
<dbReference type="SwissPalm" id="Q91XB7"/>
<dbReference type="PaxDb" id="10090-ENSMUSP00000025811"/>
<dbReference type="PeptideAtlas" id="Q91XB7"/>
<dbReference type="ProteomicsDB" id="275330"/>
<dbReference type="Pumba" id="Q91XB7"/>
<dbReference type="Antibodypedia" id="3107">
    <property type="antibodies" value="42 antibodies from 13 providers"/>
</dbReference>
<dbReference type="DNASU" id="68090"/>
<dbReference type="Ensembl" id="ENSMUST00000025811.6">
    <property type="protein sequence ID" value="ENSMUSP00000025811.5"/>
    <property type="gene ID" value="ENSMUSG00000024875.6"/>
</dbReference>
<dbReference type="GeneID" id="68090"/>
<dbReference type="KEGG" id="mmu:68090"/>
<dbReference type="UCSC" id="uc008gcd.2">
    <property type="organism name" value="mouse"/>
</dbReference>
<dbReference type="AGR" id="MGI:1915340"/>
<dbReference type="CTD" id="10897"/>
<dbReference type="MGI" id="MGI:1915340">
    <property type="gene designation" value="Yif1a"/>
</dbReference>
<dbReference type="VEuPathDB" id="HostDB:ENSMUSG00000024875"/>
<dbReference type="eggNOG" id="KOG3094">
    <property type="taxonomic scope" value="Eukaryota"/>
</dbReference>
<dbReference type="GeneTree" id="ENSGT00390000009423"/>
<dbReference type="HOGENOM" id="CLU_047877_1_1_1"/>
<dbReference type="InParanoid" id="Q91XB7"/>
<dbReference type="OMA" id="NWEVRYS"/>
<dbReference type="OrthoDB" id="337750at2759"/>
<dbReference type="PhylomeDB" id="Q91XB7"/>
<dbReference type="TreeFam" id="TF314528"/>
<dbReference type="BioGRID-ORCS" id="68090">
    <property type="hits" value="1 hit in 77 CRISPR screens"/>
</dbReference>
<dbReference type="ChiTaRS" id="Yif1a">
    <property type="organism name" value="mouse"/>
</dbReference>
<dbReference type="PRO" id="PR:Q91XB7"/>
<dbReference type="Proteomes" id="UP000000589">
    <property type="component" value="Chromosome 19"/>
</dbReference>
<dbReference type="RNAct" id="Q91XB7">
    <property type="molecule type" value="protein"/>
</dbReference>
<dbReference type="Bgee" id="ENSMUSG00000024875">
    <property type="expression patterns" value="Expressed in internal carotid artery and 259 other cell types or tissues"/>
</dbReference>
<dbReference type="ExpressionAtlas" id="Q91XB7">
    <property type="expression patterns" value="baseline and differential"/>
</dbReference>
<dbReference type="GO" id="GO:0005789">
    <property type="term" value="C:endoplasmic reticulum membrane"/>
    <property type="evidence" value="ECO:0007669"/>
    <property type="project" value="UniProtKB-SubCell"/>
</dbReference>
<dbReference type="GO" id="GO:0033116">
    <property type="term" value="C:endoplasmic reticulum-Golgi intermediate compartment membrane"/>
    <property type="evidence" value="ECO:0007669"/>
    <property type="project" value="UniProtKB-SubCell"/>
</dbReference>
<dbReference type="GO" id="GO:0000139">
    <property type="term" value="C:Golgi membrane"/>
    <property type="evidence" value="ECO:0007669"/>
    <property type="project" value="UniProtKB-SubCell"/>
</dbReference>
<dbReference type="GO" id="GO:0006888">
    <property type="term" value="P:endoplasmic reticulum to Golgi vesicle-mediated transport"/>
    <property type="evidence" value="ECO:0007669"/>
    <property type="project" value="InterPro"/>
</dbReference>
<dbReference type="GO" id="GO:0015031">
    <property type="term" value="P:protein transport"/>
    <property type="evidence" value="ECO:0007669"/>
    <property type="project" value="UniProtKB-KW"/>
</dbReference>
<dbReference type="InterPro" id="IPR005578">
    <property type="entry name" value="Yif1_fam"/>
</dbReference>
<dbReference type="PANTHER" id="PTHR14083:SF2">
    <property type="entry name" value="PROTEIN YIF1A"/>
    <property type="match status" value="1"/>
</dbReference>
<dbReference type="PANTHER" id="PTHR14083">
    <property type="entry name" value="YIP1 INTERACTING FACTOR HOMOLOG YIF1 PROTEIN"/>
    <property type="match status" value="1"/>
</dbReference>
<dbReference type="Pfam" id="PF03878">
    <property type="entry name" value="YIF1"/>
    <property type="match status" value="1"/>
</dbReference>
<accession>Q91XB7</accession>
<accession>Q9CWB2</accession>